<comment type="subcellular location">
    <subcellularLocation>
        <location evidence="1">Virion</location>
    </subcellularLocation>
</comment>
<comment type="similarity">
    <text evidence="2">Belongs to the mimivirus R160 family.</text>
</comment>
<dbReference type="EMBL" id="AY653733">
    <property type="protein sequence ID" value="AAV50966.1"/>
    <property type="molecule type" value="Genomic_DNA"/>
</dbReference>
<dbReference type="SMR" id="Q5UNW2"/>
<dbReference type="KEGG" id="vg:9925359"/>
<dbReference type="OrthoDB" id="5156at10239"/>
<dbReference type="Proteomes" id="UP000001134">
    <property type="component" value="Genome"/>
</dbReference>
<dbReference type="GO" id="GO:0044423">
    <property type="term" value="C:virion component"/>
    <property type="evidence" value="ECO:0007669"/>
    <property type="project" value="UniProtKB-KW"/>
</dbReference>
<dbReference type="InterPro" id="IPR043885">
    <property type="entry name" value="DUF5847"/>
</dbReference>
<dbReference type="Pfam" id="PF19165">
    <property type="entry name" value="DUF5847"/>
    <property type="match status" value="1"/>
</dbReference>
<name>YR706_MIMIV</name>
<sequence>MSNINKILDPNSRMVSGPLNVVRLEGNFYGIKKVLYLFMDYHADVSDQTQCENIFSEDVQKYFAKTFYKLNDSNKIYDFFLEVFPTEIAQDIYSDDVPEIDHKEMYIEEVVKLFKKLFRYDPKKNRVLMNNITKNIRLHYIDIRDYYKNNVHNRTADMNIIARNFMVKGNIKVSQLNKIIKLMKIIRNHLEEIVEILEYSPKNNKSQRSKIIKTRDYDDLDIQTIEYLARKIKSTYKYQDVKKIMNMLLQQSIDNFKSTIKNIDESIKIFTNYAKQISESTDKLVRDPNTSYVYVYGLSPYTIRNMIVDIANRVDKIMDEQLIEFFARFTDIFFLRRFLDKDYITNGIIYTGALHSNTYINVLVKYFDFKVTHFSYSKISNPQLLTSEIKKRSLMEIQELILPNSFGQCSDMNSFPKEFQ</sequence>
<feature type="chain" id="PRO_0000071331" description="Uncharacterized protein R706">
    <location>
        <begin position="1"/>
        <end position="420"/>
    </location>
</feature>
<accession>Q5UNW2</accession>
<proteinExistence type="evidence at protein level"/>
<organism>
    <name type="scientific">Acanthamoeba polyphaga mimivirus</name>
    <name type="common">APMV</name>
    <dbReference type="NCBI Taxonomy" id="212035"/>
    <lineage>
        <taxon>Viruses</taxon>
        <taxon>Varidnaviria</taxon>
        <taxon>Bamfordvirae</taxon>
        <taxon>Nucleocytoviricota</taxon>
        <taxon>Megaviricetes</taxon>
        <taxon>Imitervirales</taxon>
        <taxon>Mimiviridae</taxon>
        <taxon>Megamimivirinae</taxon>
        <taxon>Mimivirus</taxon>
        <taxon>Mimivirus bradfordmassiliense</taxon>
    </lineage>
</organism>
<keyword id="KW-1185">Reference proteome</keyword>
<keyword id="KW-0946">Virion</keyword>
<organismHost>
    <name type="scientific">Acanthamoeba polyphaga</name>
    <name type="common">Amoeba</name>
    <dbReference type="NCBI Taxonomy" id="5757"/>
</organismHost>
<gene>
    <name type="ordered locus">MIMI_R706</name>
</gene>
<evidence type="ECO:0000269" key="1">
    <source>
    </source>
</evidence>
<evidence type="ECO:0000305" key="2"/>
<protein>
    <recommendedName>
        <fullName>Uncharacterized protein R706</fullName>
    </recommendedName>
</protein>
<reference key="1">
    <citation type="journal article" date="2004" name="Science">
        <title>The 1.2-megabase genome sequence of Mimivirus.</title>
        <authorList>
            <person name="Raoult D."/>
            <person name="Audic S."/>
            <person name="Robert C."/>
            <person name="Abergel C."/>
            <person name="Renesto P."/>
            <person name="Ogata H."/>
            <person name="La Scola B."/>
            <person name="Susan M."/>
            <person name="Claverie J.-M."/>
        </authorList>
    </citation>
    <scope>NUCLEOTIDE SEQUENCE [LARGE SCALE GENOMIC DNA]</scope>
    <source>
        <strain>Rowbotham-Bradford</strain>
    </source>
</reference>
<reference key="2">
    <citation type="journal article" date="2006" name="J. Virol.">
        <title>Mimivirus giant particles incorporate a large fraction of anonymous and unique gene products.</title>
        <authorList>
            <person name="Renesto P."/>
            <person name="Abergel C."/>
            <person name="Decloquement P."/>
            <person name="Moinier D."/>
            <person name="Azza S."/>
            <person name="Ogata H."/>
            <person name="Fourquet P."/>
            <person name="Gorvel J.-P."/>
            <person name="Claverie J.-M."/>
            <person name="Raoult D."/>
        </authorList>
    </citation>
    <scope>IDENTIFICATION BY MASS SPECTROMETRY [LARGE SCALE ANALYSIS]</scope>
    <scope>SUBCELLULAR LOCATION</scope>
</reference>